<accession>Q1L994</accession>
<accession>A7YXZ6</accession>
<accession>Q08C55</accession>
<keyword id="KW-0175">Coiled coil</keyword>
<keyword id="KW-0433">Leucine-rich repeat</keyword>
<keyword id="KW-0650">Protein phosphatase inhibitor</keyword>
<keyword id="KW-1185">Reference proteome</keyword>
<keyword id="KW-0677">Repeat</keyword>
<gene>
    <name type="primary">ppp1r37</name>
    <name type="synonym">lrrc68</name>
    <name type="ORF">si:ch211-234g24.1</name>
</gene>
<name>PPR37_DANRE</name>
<feature type="chain" id="PRO_0000320941" description="Protein phosphatase 1 regulatory subunit 37">
    <location>
        <begin position="1"/>
        <end position="919"/>
    </location>
</feature>
<feature type="repeat" description="LRR 1">
    <location>
        <begin position="340"/>
        <end position="361"/>
    </location>
</feature>
<feature type="repeat" description="LRR 2">
    <location>
        <begin position="368"/>
        <end position="388"/>
    </location>
</feature>
<feature type="repeat" description="LRR 3">
    <location>
        <begin position="396"/>
        <end position="417"/>
    </location>
</feature>
<feature type="repeat" description="LRR 4">
    <location>
        <begin position="425"/>
        <end position="445"/>
    </location>
</feature>
<feature type="repeat" description="LRR 5">
    <location>
        <begin position="454"/>
        <end position="474"/>
    </location>
</feature>
<feature type="repeat" description="LRR 6">
    <location>
        <begin position="482"/>
        <end position="502"/>
    </location>
</feature>
<feature type="region of interest" description="Disordered" evidence="3">
    <location>
        <begin position="626"/>
        <end position="716"/>
    </location>
</feature>
<feature type="region of interest" description="Disordered" evidence="3">
    <location>
        <begin position="790"/>
        <end position="866"/>
    </location>
</feature>
<feature type="coiled-coil region" evidence="2">
    <location>
        <begin position="833"/>
        <end position="861"/>
    </location>
</feature>
<feature type="compositionally biased region" description="Acidic residues" evidence="3">
    <location>
        <begin position="631"/>
        <end position="640"/>
    </location>
</feature>
<feature type="compositionally biased region" description="Basic and acidic residues" evidence="3">
    <location>
        <begin position="641"/>
        <end position="658"/>
    </location>
</feature>
<feature type="compositionally biased region" description="Acidic residues" evidence="3">
    <location>
        <begin position="677"/>
        <end position="690"/>
    </location>
</feature>
<feature type="compositionally biased region" description="Low complexity" evidence="3">
    <location>
        <begin position="691"/>
        <end position="701"/>
    </location>
</feature>
<feature type="compositionally biased region" description="Polar residues" evidence="3">
    <location>
        <begin position="791"/>
        <end position="801"/>
    </location>
</feature>
<feature type="compositionally biased region" description="Polar residues" evidence="3">
    <location>
        <begin position="811"/>
        <end position="837"/>
    </location>
</feature>
<feature type="sequence conflict" description="In Ref. 2; AAI41793." evidence="4" ref="2">
    <original>V</original>
    <variation>A</variation>
    <location>
        <position position="19"/>
    </location>
</feature>
<feature type="sequence conflict" description="In Ref. 2; AAI41793." evidence="4" ref="2">
    <original>LA</original>
    <variation>PV</variation>
    <location>
        <begin position="98"/>
        <end position="99"/>
    </location>
</feature>
<feature type="sequence conflict" description="In Ref. 2; AAI24388." evidence="4" ref="2">
    <original>E</original>
    <variation>G</variation>
    <location>
        <position position="183"/>
    </location>
</feature>
<feature type="sequence conflict" description="In Ref. 2; AAI41793." evidence="4" ref="2">
    <original>L</original>
    <variation>S</variation>
    <location>
        <position position="191"/>
    </location>
</feature>
<feature type="sequence conflict" description="In Ref. 2; AAI41793." evidence="4" ref="2">
    <original>K</original>
    <variation>R</variation>
    <location>
        <position position="609"/>
    </location>
</feature>
<feature type="sequence conflict" description="In Ref. 2; AAI41793." evidence="4" ref="2">
    <original>H</original>
    <variation>HE</variation>
    <location>
        <position position="632"/>
    </location>
</feature>
<feature type="sequence conflict" description="In Ref. 2; AAI41793." evidence="4" ref="2">
    <original>M</original>
    <variation>L</variation>
    <location>
        <position position="776"/>
    </location>
</feature>
<feature type="sequence conflict" description="In Ref. 2; AAI41793." evidence="4" ref="2">
    <location>
        <begin position="842"/>
        <end position="888"/>
    </location>
</feature>
<protein>
    <recommendedName>
        <fullName>Protein phosphatase 1 regulatory subunit 37</fullName>
    </recommendedName>
    <alternativeName>
        <fullName>Leucine-rich repeat-containing protein 68</fullName>
    </alternativeName>
</protein>
<proteinExistence type="evidence at transcript level"/>
<sequence length="919" mass="100325">MNCEDQAVDLCKAIDLCNVSDNTISHPTPAEEILPRDGLQLMDGDQEEQDAAVLTRLKDVHLKDDALHTKNNGSIAVSADPVNGSAGDLQQSTVEEPLATKCSVGDVGDDGEMDIGVDLSLDENGVLEFEPTAQTQSEESASSCENSLISDTVIELHSQEPLEEHSVDVPSETVPAAATPVVEEAGIKHGLKRVTFPSDEDIVSGAVEPKDPWRHAQNVTVEEILNAYRQACQKLNCKPIPKVLKQTQDLKDLTQRNECLDLKGEKLDYKSCESLEEIFKRVQFKLVDLEQTNLDEDGASALFDMIEYYESATHLNISNNKHIGTRGWQAAAHMMRKTNSLQYLDARNTPLLDHSAPFVARALRISSSLTVLHLENSGISGRPLMLLATALKMNMNLRELYLAENKLNGLQDSAQLGNLLKFNYNIQILDLRNNHILDSGLAYVCEGLKEQRKGLVTLVLWNNQLTHNGMGYLAAALPFTQSLETLNLGHNAVGNEGVHKLKDGLISNRSILRLGLASTKLSCEGAVAIAEFIAESPRLLRLDMRENEIKTGGLMALSLAFKVNTSLLRLDLDREPKKETVKSFIETQRALLADIQNGCKRNFILAREKEETEQKMRLSASMAEIATEDQTHEEEEEEEASPLKKIEEETTDALKDATQESSEVSENQEPKDQESTPQDDSDSDTEDEETPTNTSLTSTSPIPIPAAADTSKTIPSTPPIASPAVISGITVTEASIVTPSSPGRCISVSSPGRGHKIFMVTRVESPPEQQQTSIAMLKSIQPSAITDIKAPSQTQNSTQPTEKSHAEKTPDAQQEDSVSTSTPSLDANIDQTQLTESVSEEEQKKAETLNNEADINEDANTGAPLPNGLKPEFALFEFEGAKPASCIMEHVSVTAELSCGQDLEELLLDASLETSRDAP</sequence>
<evidence type="ECO:0000250" key="1"/>
<evidence type="ECO:0000255" key="2"/>
<evidence type="ECO:0000256" key="3">
    <source>
        <dbReference type="SAM" id="MobiDB-lite"/>
    </source>
</evidence>
<evidence type="ECO:0000305" key="4"/>
<dbReference type="EMBL" id="CR381630">
    <property type="protein sequence ID" value="CAK04639.1"/>
    <property type="molecule type" value="Genomic_DNA"/>
</dbReference>
<dbReference type="EMBL" id="BC124387">
    <property type="protein sequence ID" value="AAI24388.1"/>
    <property type="status" value="ALT_SEQ"/>
    <property type="molecule type" value="mRNA"/>
</dbReference>
<dbReference type="EMBL" id="BC141792">
    <property type="protein sequence ID" value="AAI41793.1"/>
    <property type="molecule type" value="mRNA"/>
</dbReference>
<dbReference type="SMR" id="Q1L994"/>
<dbReference type="FunCoup" id="Q1L994">
    <property type="interactions" value="1152"/>
</dbReference>
<dbReference type="STRING" id="7955.ENSDARP00000101061"/>
<dbReference type="PaxDb" id="7955-ENSDARP00000118991"/>
<dbReference type="AGR" id="ZFIN:ZDB-GENE-050208-7"/>
<dbReference type="ZFIN" id="ZDB-GENE-050208-7">
    <property type="gene designation" value="ppp1r37"/>
</dbReference>
<dbReference type="eggNOG" id="KOG1908">
    <property type="taxonomic scope" value="Eukaryota"/>
</dbReference>
<dbReference type="InParanoid" id="Q1L994"/>
<dbReference type="OrthoDB" id="10034042at2759"/>
<dbReference type="PhylomeDB" id="Q1L994"/>
<dbReference type="TreeFam" id="TF328391"/>
<dbReference type="PRO" id="PR:Q1L994"/>
<dbReference type="Proteomes" id="UP000000437">
    <property type="component" value="Unplaced"/>
</dbReference>
<dbReference type="GO" id="GO:0004864">
    <property type="term" value="F:protein phosphatase inhibitor activity"/>
    <property type="evidence" value="ECO:0007669"/>
    <property type="project" value="UniProtKB-KW"/>
</dbReference>
<dbReference type="CDD" id="cd00116">
    <property type="entry name" value="LRR_RI"/>
    <property type="match status" value="1"/>
</dbReference>
<dbReference type="FunFam" id="3.80.10.10:FF:000324">
    <property type="entry name" value="Protein phosphatase 1 regulatory subunit 37"/>
    <property type="match status" value="1"/>
</dbReference>
<dbReference type="Gene3D" id="3.80.10.10">
    <property type="entry name" value="Ribonuclease Inhibitor"/>
    <property type="match status" value="1"/>
</dbReference>
<dbReference type="InterPro" id="IPR001611">
    <property type="entry name" value="Leu-rich_rpt"/>
</dbReference>
<dbReference type="InterPro" id="IPR032675">
    <property type="entry name" value="LRR_dom_sf"/>
</dbReference>
<dbReference type="InterPro" id="IPR051279">
    <property type="entry name" value="PP1-Reg/Actin-Interact_Protein"/>
</dbReference>
<dbReference type="PANTHER" id="PTHR24112">
    <property type="entry name" value="LEUCINE-RICH REPEAT, ISOFORM F-RELATED"/>
    <property type="match status" value="1"/>
</dbReference>
<dbReference type="PANTHER" id="PTHR24112:SF9">
    <property type="entry name" value="PROTEIN PHOSPHATASE 1 REGULATORY SUBUNIT 37"/>
    <property type="match status" value="1"/>
</dbReference>
<dbReference type="Pfam" id="PF13516">
    <property type="entry name" value="LRR_6"/>
    <property type="match status" value="3"/>
</dbReference>
<dbReference type="SMART" id="SM00368">
    <property type="entry name" value="LRR_RI"/>
    <property type="match status" value="7"/>
</dbReference>
<dbReference type="SUPFAM" id="SSF52047">
    <property type="entry name" value="RNI-like"/>
    <property type="match status" value="1"/>
</dbReference>
<dbReference type="PROSITE" id="PS51450">
    <property type="entry name" value="LRR"/>
    <property type="match status" value="4"/>
</dbReference>
<reference key="1">
    <citation type="journal article" date="2013" name="Nature">
        <title>The zebrafish reference genome sequence and its relationship to the human genome.</title>
        <authorList>
            <person name="Howe K."/>
            <person name="Clark M.D."/>
            <person name="Torroja C.F."/>
            <person name="Torrance J."/>
            <person name="Berthelot C."/>
            <person name="Muffato M."/>
            <person name="Collins J.E."/>
            <person name="Humphray S."/>
            <person name="McLaren K."/>
            <person name="Matthews L."/>
            <person name="McLaren S."/>
            <person name="Sealy I."/>
            <person name="Caccamo M."/>
            <person name="Churcher C."/>
            <person name="Scott C."/>
            <person name="Barrett J.C."/>
            <person name="Koch R."/>
            <person name="Rauch G.J."/>
            <person name="White S."/>
            <person name="Chow W."/>
            <person name="Kilian B."/>
            <person name="Quintais L.T."/>
            <person name="Guerra-Assuncao J.A."/>
            <person name="Zhou Y."/>
            <person name="Gu Y."/>
            <person name="Yen J."/>
            <person name="Vogel J.H."/>
            <person name="Eyre T."/>
            <person name="Redmond S."/>
            <person name="Banerjee R."/>
            <person name="Chi J."/>
            <person name="Fu B."/>
            <person name="Langley E."/>
            <person name="Maguire S.F."/>
            <person name="Laird G.K."/>
            <person name="Lloyd D."/>
            <person name="Kenyon E."/>
            <person name="Donaldson S."/>
            <person name="Sehra H."/>
            <person name="Almeida-King J."/>
            <person name="Loveland J."/>
            <person name="Trevanion S."/>
            <person name="Jones M."/>
            <person name="Quail M."/>
            <person name="Willey D."/>
            <person name="Hunt A."/>
            <person name="Burton J."/>
            <person name="Sims S."/>
            <person name="McLay K."/>
            <person name="Plumb B."/>
            <person name="Davis J."/>
            <person name="Clee C."/>
            <person name="Oliver K."/>
            <person name="Clark R."/>
            <person name="Riddle C."/>
            <person name="Elliot D."/>
            <person name="Threadgold G."/>
            <person name="Harden G."/>
            <person name="Ware D."/>
            <person name="Begum S."/>
            <person name="Mortimore B."/>
            <person name="Kerry G."/>
            <person name="Heath P."/>
            <person name="Phillimore B."/>
            <person name="Tracey A."/>
            <person name="Corby N."/>
            <person name="Dunn M."/>
            <person name="Johnson C."/>
            <person name="Wood J."/>
            <person name="Clark S."/>
            <person name="Pelan S."/>
            <person name="Griffiths G."/>
            <person name="Smith M."/>
            <person name="Glithero R."/>
            <person name="Howden P."/>
            <person name="Barker N."/>
            <person name="Lloyd C."/>
            <person name="Stevens C."/>
            <person name="Harley J."/>
            <person name="Holt K."/>
            <person name="Panagiotidis G."/>
            <person name="Lovell J."/>
            <person name="Beasley H."/>
            <person name="Henderson C."/>
            <person name="Gordon D."/>
            <person name="Auger K."/>
            <person name="Wright D."/>
            <person name="Collins J."/>
            <person name="Raisen C."/>
            <person name="Dyer L."/>
            <person name="Leung K."/>
            <person name="Robertson L."/>
            <person name="Ambridge K."/>
            <person name="Leongamornlert D."/>
            <person name="McGuire S."/>
            <person name="Gilderthorp R."/>
            <person name="Griffiths C."/>
            <person name="Manthravadi D."/>
            <person name="Nichol S."/>
            <person name="Barker G."/>
            <person name="Whitehead S."/>
            <person name="Kay M."/>
            <person name="Brown J."/>
            <person name="Murnane C."/>
            <person name="Gray E."/>
            <person name="Humphries M."/>
            <person name="Sycamore N."/>
            <person name="Barker D."/>
            <person name="Saunders D."/>
            <person name="Wallis J."/>
            <person name="Babbage A."/>
            <person name="Hammond S."/>
            <person name="Mashreghi-Mohammadi M."/>
            <person name="Barr L."/>
            <person name="Martin S."/>
            <person name="Wray P."/>
            <person name="Ellington A."/>
            <person name="Matthews N."/>
            <person name="Ellwood M."/>
            <person name="Woodmansey R."/>
            <person name="Clark G."/>
            <person name="Cooper J."/>
            <person name="Tromans A."/>
            <person name="Grafham D."/>
            <person name="Skuce C."/>
            <person name="Pandian R."/>
            <person name="Andrews R."/>
            <person name="Harrison E."/>
            <person name="Kimberley A."/>
            <person name="Garnett J."/>
            <person name="Fosker N."/>
            <person name="Hall R."/>
            <person name="Garner P."/>
            <person name="Kelly D."/>
            <person name="Bird C."/>
            <person name="Palmer S."/>
            <person name="Gehring I."/>
            <person name="Berger A."/>
            <person name="Dooley C.M."/>
            <person name="Ersan-Urun Z."/>
            <person name="Eser C."/>
            <person name="Geiger H."/>
            <person name="Geisler M."/>
            <person name="Karotki L."/>
            <person name="Kirn A."/>
            <person name="Konantz J."/>
            <person name="Konantz M."/>
            <person name="Oberlander M."/>
            <person name="Rudolph-Geiger S."/>
            <person name="Teucke M."/>
            <person name="Lanz C."/>
            <person name="Raddatz G."/>
            <person name="Osoegawa K."/>
            <person name="Zhu B."/>
            <person name="Rapp A."/>
            <person name="Widaa S."/>
            <person name="Langford C."/>
            <person name="Yang F."/>
            <person name="Schuster S.C."/>
            <person name="Carter N.P."/>
            <person name="Harrow J."/>
            <person name="Ning Z."/>
            <person name="Herrero J."/>
            <person name="Searle S.M."/>
            <person name="Enright A."/>
            <person name="Geisler R."/>
            <person name="Plasterk R.H."/>
            <person name="Lee C."/>
            <person name="Westerfield M."/>
            <person name="de Jong P.J."/>
            <person name="Zon L.I."/>
            <person name="Postlethwait J.H."/>
            <person name="Nusslein-Volhard C."/>
            <person name="Hubbard T.J."/>
            <person name="Roest Crollius H."/>
            <person name="Rogers J."/>
            <person name="Stemple D.L."/>
        </authorList>
    </citation>
    <scope>NUCLEOTIDE SEQUENCE [LARGE SCALE GENOMIC DNA]</scope>
    <source>
        <strain>Tuebingen</strain>
    </source>
</reference>
<reference key="2">
    <citation type="submission" date="2007-05" db="EMBL/GenBank/DDBJ databases">
        <authorList>
            <consortium name="NIH - Zebrafish Gene Collection (ZGC) project"/>
        </authorList>
    </citation>
    <scope>NUCLEOTIDE SEQUENCE [LARGE SCALE MRNA]</scope>
    <source>
        <tissue>Embryo</tissue>
    </source>
</reference>
<comment type="function">
    <text evidence="1">May inhibit phosphatase activity of protein phosphatase 1 (PP1) complexes.</text>
</comment>
<comment type="similarity">
    <text evidence="4">Belongs to the PPP1R37 family.</text>
</comment>
<comment type="sequence caution" evidence="4">
    <conflict type="erroneous initiation">
        <sequence resource="EMBL-CDS" id="AAI24388"/>
    </conflict>
    <text>Truncated N-terminus.</text>
</comment>
<comment type="sequence caution" evidence="4">
    <conflict type="miscellaneous discrepancy">
        <sequence resource="EMBL-CDS" id="AAI24388"/>
    </conflict>
    <text>Contaminating sequence. Potential poly-A sequence.</text>
</comment>
<organism>
    <name type="scientific">Danio rerio</name>
    <name type="common">Zebrafish</name>
    <name type="synonym">Brachydanio rerio</name>
    <dbReference type="NCBI Taxonomy" id="7955"/>
    <lineage>
        <taxon>Eukaryota</taxon>
        <taxon>Metazoa</taxon>
        <taxon>Chordata</taxon>
        <taxon>Craniata</taxon>
        <taxon>Vertebrata</taxon>
        <taxon>Euteleostomi</taxon>
        <taxon>Actinopterygii</taxon>
        <taxon>Neopterygii</taxon>
        <taxon>Teleostei</taxon>
        <taxon>Ostariophysi</taxon>
        <taxon>Cypriniformes</taxon>
        <taxon>Danionidae</taxon>
        <taxon>Danioninae</taxon>
        <taxon>Danio</taxon>
    </lineage>
</organism>